<dbReference type="EC" id="2.7.-.-" evidence="1"/>
<dbReference type="EMBL" id="CP001052">
    <property type="protein sequence ID" value="ACD15077.1"/>
    <property type="molecule type" value="Genomic_DNA"/>
</dbReference>
<dbReference type="RefSeq" id="WP_012431714.1">
    <property type="nucleotide sequence ID" value="NC_010681.1"/>
</dbReference>
<dbReference type="SMR" id="B2SX38"/>
<dbReference type="STRING" id="398527.Bphyt_0652"/>
<dbReference type="KEGG" id="bpy:Bphyt_0652"/>
<dbReference type="eggNOG" id="COG0661">
    <property type="taxonomic scope" value="Bacteria"/>
</dbReference>
<dbReference type="HOGENOM" id="CLU_006533_0_0_4"/>
<dbReference type="OrthoDB" id="9795390at2"/>
<dbReference type="UniPathway" id="UPA00232"/>
<dbReference type="Proteomes" id="UP000001739">
    <property type="component" value="Chromosome 1"/>
</dbReference>
<dbReference type="GO" id="GO:0005886">
    <property type="term" value="C:plasma membrane"/>
    <property type="evidence" value="ECO:0007669"/>
    <property type="project" value="UniProtKB-SubCell"/>
</dbReference>
<dbReference type="GO" id="GO:0005524">
    <property type="term" value="F:ATP binding"/>
    <property type="evidence" value="ECO:0007669"/>
    <property type="project" value="UniProtKB-KW"/>
</dbReference>
<dbReference type="GO" id="GO:0004672">
    <property type="term" value="F:protein kinase activity"/>
    <property type="evidence" value="ECO:0007669"/>
    <property type="project" value="UniProtKB-UniRule"/>
</dbReference>
<dbReference type="GO" id="GO:0010795">
    <property type="term" value="P:regulation of ubiquinone biosynthetic process"/>
    <property type="evidence" value="ECO:0007669"/>
    <property type="project" value="UniProtKB-UniRule"/>
</dbReference>
<dbReference type="GO" id="GO:0006744">
    <property type="term" value="P:ubiquinone biosynthetic process"/>
    <property type="evidence" value="ECO:0007669"/>
    <property type="project" value="UniProtKB-UniPathway"/>
</dbReference>
<dbReference type="CDD" id="cd13972">
    <property type="entry name" value="UbiB"/>
    <property type="match status" value="1"/>
</dbReference>
<dbReference type="HAMAP" id="MF_00414">
    <property type="entry name" value="UbiB"/>
    <property type="match status" value="1"/>
</dbReference>
<dbReference type="InterPro" id="IPR004147">
    <property type="entry name" value="ABC1_dom"/>
</dbReference>
<dbReference type="InterPro" id="IPR011009">
    <property type="entry name" value="Kinase-like_dom_sf"/>
</dbReference>
<dbReference type="InterPro" id="IPR010232">
    <property type="entry name" value="UbiB"/>
</dbReference>
<dbReference type="InterPro" id="IPR045308">
    <property type="entry name" value="UbiB_bact"/>
</dbReference>
<dbReference type="InterPro" id="IPR050154">
    <property type="entry name" value="UbiB_kinase"/>
</dbReference>
<dbReference type="NCBIfam" id="NF003404">
    <property type="entry name" value="PRK04750.1"/>
    <property type="match status" value="1"/>
</dbReference>
<dbReference type="NCBIfam" id="TIGR01982">
    <property type="entry name" value="UbiB"/>
    <property type="match status" value="1"/>
</dbReference>
<dbReference type="PANTHER" id="PTHR10566">
    <property type="entry name" value="CHAPERONE-ACTIVITY OF BC1 COMPLEX CABC1 -RELATED"/>
    <property type="match status" value="1"/>
</dbReference>
<dbReference type="PANTHER" id="PTHR10566:SF113">
    <property type="entry name" value="PROTEIN ACTIVITY OF BC1 COMPLEX KINASE 7, CHLOROPLASTIC"/>
    <property type="match status" value="1"/>
</dbReference>
<dbReference type="Pfam" id="PF03109">
    <property type="entry name" value="ABC1"/>
    <property type="match status" value="1"/>
</dbReference>
<dbReference type="SUPFAM" id="SSF56112">
    <property type="entry name" value="Protein kinase-like (PK-like)"/>
    <property type="match status" value="1"/>
</dbReference>
<accession>B2SX38</accession>
<organism>
    <name type="scientific">Paraburkholderia phytofirmans (strain DSM 17436 / LMG 22146 / PsJN)</name>
    <name type="common">Burkholderia phytofirmans</name>
    <dbReference type="NCBI Taxonomy" id="398527"/>
    <lineage>
        <taxon>Bacteria</taxon>
        <taxon>Pseudomonadati</taxon>
        <taxon>Pseudomonadota</taxon>
        <taxon>Betaproteobacteria</taxon>
        <taxon>Burkholderiales</taxon>
        <taxon>Burkholderiaceae</taxon>
        <taxon>Paraburkholderia</taxon>
    </lineage>
</organism>
<proteinExistence type="inferred from homology"/>
<gene>
    <name evidence="1" type="primary">ubiB</name>
    <name type="ordered locus">Bphyt_0652</name>
</gene>
<reference key="1">
    <citation type="journal article" date="2011" name="J. Bacteriol.">
        <title>Complete genome sequence of the plant growth-promoting endophyte Burkholderia phytofirmans strain PsJN.</title>
        <authorList>
            <person name="Weilharter A."/>
            <person name="Mitter B."/>
            <person name="Shin M.V."/>
            <person name="Chain P.S."/>
            <person name="Nowak J."/>
            <person name="Sessitsch A."/>
        </authorList>
    </citation>
    <scope>NUCLEOTIDE SEQUENCE [LARGE SCALE GENOMIC DNA]</scope>
    <source>
        <strain>DSM 17436 / LMG 22146 / PsJN</strain>
    </source>
</reference>
<sequence length="525" mass="59665">MRFLRFLKIFFTVIRFGLDEMMLSRVNDRRVRLLLRITTIGRKFDAPPGVRLRLALESLGPIFVKFGQVLSTRRDLLPVDIADELAKLQDQVPPFESAVAIRLVENALGAPVDVLFDDFERVPVASASIAQVHFATVKAGQHAGKAVAVKVLRPNMLPVIDSDLALLRDIAVWAERLWADGKRLKPREVVAEFDKYLHDELDLMREAANGSQLRRNFAGLDLLLVPEMYWEFCTPTVLVMERMVGVPISQVETLRAAGVDIPKLAREGVEIFFTQVFRDGFFHADMHPGNIQVSLDPAHFGRYIALDFGIIGALSDFDKNYLAQNFLAFFKRDYHRVATLHLESGWVPPTTRVEELESAIRAVCEPYFDRALKDISLGQVLMRLFSTSRRFNVEIQPQLVLLQKTMLNVEGLGRSLDPELDLWKTAKPYLERWMNEQIGLRGWYERLKIEAPQWSKTLPQLPRLIHHALAERHDNKRGANDDMIRQILLEQKRTNRLLQGLLLFGVAVGVGAVLARAFLALAYGG</sequence>
<protein>
    <recommendedName>
        <fullName evidence="1">Probable protein kinase UbiB</fullName>
        <ecNumber evidence="1">2.7.-.-</ecNumber>
    </recommendedName>
    <alternativeName>
        <fullName evidence="1">Ubiquinone biosynthesis protein UbiB</fullName>
    </alternativeName>
</protein>
<keyword id="KW-0067">ATP-binding</keyword>
<keyword id="KW-0997">Cell inner membrane</keyword>
<keyword id="KW-1003">Cell membrane</keyword>
<keyword id="KW-0418">Kinase</keyword>
<keyword id="KW-0472">Membrane</keyword>
<keyword id="KW-0547">Nucleotide-binding</keyword>
<keyword id="KW-0808">Transferase</keyword>
<keyword id="KW-0812">Transmembrane</keyword>
<keyword id="KW-1133">Transmembrane helix</keyword>
<keyword id="KW-0831">Ubiquinone biosynthesis</keyword>
<feature type="chain" id="PRO_1000123898" description="Probable protein kinase UbiB">
    <location>
        <begin position="1"/>
        <end position="525"/>
    </location>
</feature>
<feature type="transmembrane region" description="Helical" evidence="1">
    <location>
        <begin position="501"/>
        <end position="521"/>
    </location>
</feature>
<feature type="domain" description="Protein kinase" evidence="1">
    <location>
        <begin position="118"/>
        <end position="500"/>
    </location>
</feature>
<feature type="active site" description="Proton acceptor" evidence="1">
    <location>
        <position position="285"/>
    </location>
</feature>
<feature type="binding site" evidence="1">
    <location>
        <begin position="124"/>
        <end position="132"/>
    </location>
    <ligand>
        <name>ATP</name>
        <dbReference type="ChEBI" id="CHEBI:30616"/>
    </ligand>
</feature>
<feature type="binding site" evidence="1">
    <location>
        <position position="150"/>
    </location>
    <ligand>
        <name>ATP</name>
        <dbReference type="ChEBI" id="CHEBI:30616"/>
    </ligand>
</feature>
<comment type="function">
    <text evidence="1">Is probably a protein kinase regulator of UbiI activity which is involved in aerobic coenzyme Q (ubiquinone) biosynthesis.</text>
</comment>
<comment type="pathway">
    <text>Cofactor biosynthesis; ubiquinone biosynthesis [regulation].</text>
</comment>
<comment type="subcellular location">
    <subcellularLocation>
        <location evidence="1">Cell inner membrane</location>
        <topology evidence="1">Single-pass membrane protein</topology>
    </subcellularLocation>
</comment>
<comment type="similarity">
    <text evidence="1">Belongs to the ABC1 family. UbiB subfamily.</text>
</comment>
<evidence type="ECO:0000255" key="1">
    <source>
        <dbReference type="HAMAP-Rule" id="MF_00414"/>
    </source>
</evidence>
<name>UBIB_PARPJ</name>